<evidence type="ECO:0000255" key="1">
    <source>
        <dbReference type="HAMAP-Rule" id="MF_00049"/>
    </source>
</evidence>
<reference key="1">
    <citation type="journal article" date="2005" name="Nat. Biotechnol.">
        <title>Complete genome sequence of the plant commensal Pseudomonas fluorescens Pf-5.</title>
        <authorList>
            <person name="Paulsen I.T."/>
            <person name="Press C.M."/>
            <person name="Ravel J."/>
            <person name="Kobayashi D.Y."/>
            <person name="Myers G.S.A."/>
            <person name="Mavrodi D.V."/>
            <person name="DeBoy R.T."/>
            <person name="Seshadri R."/>
            <person name="Ren Q."/>
            <person name="Madupu R."/>
            <person name="Dodson R.J."/>
            <person name="Durkin A.S."/>
            <person name="Brinkac L.M."/>
            <person name="Daugherty S.C."/>
            <person name="Sullivan S.A."/>
            <person name="Rosovitz M.J."/>
            <person name="Gwinn M.L."/>
            <person name="Zhou L."/>
            <person name="Schneider D.J."/>
            <person name="Cartinhour S.W."/>
            <person name="Nelson W.C."/>
            <person name="Weidman J."/>
            <person name="Watkins K."/>
            <person name="Tran K."/>
            <person name="Khouri H."/>
            <person name="Pierson E.A."/>
            <person name="Pierson L.S. III"/>
            <person name="Thomashow L.S."/>
            <person name="Loper J.E."/>
        </authorList>
    </citation>
    <scope>NUCLEOTIDE SEQUENCE [LARGE SCALE GENOMIC DNA]</scope>
    <source>
        <strain>ATCC BAA-477 / NRRL B-23932 / Pf-5</strain>
    </source>
</reference>
<keyword id="KW-0030">Aminoacyl-tRNA synthetase</keyword>
<keyword id="KW-0067">ATP-binding</keyword>
<keyword id="KW-0963">Cytoplasm</keyword>
<keyword id="KW-0436">Ligase</keyword>
<keyword id="KW-0547">Nucleotide-binding</keyword>
<keyword id="KW-0648">Protein biosynthesis</keyword>
<gene>
    <name evidence="1" type="primary">leuS</name>
    <name type="ordered locus">PFL_5439</name>
</gene>
<name>SYL_PSEF5</name>
<comment type="catalytic activity">
    <reaction evidence="1">
        <text>tRNA(Leu) + L-leucine + ATP = L-leucyl-tRNA(Leu) + AMP + diphosphate</text>
        <dbReference type="Rhea" id="RHEA:11688"/>
        <dbReference type="Rhea" id="RHEA-COMP:9613"/>
        <dbReference type="Rhea" id="RHEA-COMP:9622"/>
        <dbReference type="ChEBI" id="CHEBI:30616"/>
        <dbReference type="ChEBI" id="CHEBI:33019"/>
        <dbReference type="ChEBI" id="CHEBI:57427"/>
        <dbReference type="ChEBI" id="CHEBI:78442"/>
        <dbReference type="ChEBI" id="CHEBI:78494"/>
        <dbReference type="ChEBI" id="CHEBI:456215"/>
        <dbReference type="EC" id="6.1.1.4"/>
    </reaction>
</comment>
<comment type="subcellular location">
    <subcellularLocation>
        <location evidence="1">Cytoplasm</location>
    </subcellularLocation>
</comment>
<comment type="similarity">
    <text evidence="1">Belongs to the class-I aminoacyl-tRNA synthetase family.</text>
</comment>
<dbReference type="EC" id="6.1.1.4" evidence="1"/>
<dbReference type="EMBL" id="CP000076">
    <property type="protein sequence ID" value="AAY94649.1"/>
    <property type="molecule type" value="Genomic_DNA"/>
</dbReference>
<dbReference type="RefSeq" id="WP_011063657.1">
    <property type="nucleotide sequence ID" value="NC_004129.6"/>
</dbReference>
<dbReference type="SMR" id="Q4K5H6"/>
<dbReference type="STRING" id="220664.PFL_5439"/>
<dbReference type="KEGG" id="pfl:PFL_5439"/>
<dbReference type="PATRIC" id="fig|220664.5.peg.5552"/>
<dbReference type="eggNOG" id="COG0495">
    <property type="taxonomic scope" value="Bacteria"/>
</dbReference>
<dbReference type="HOGENOM" id="CLU_004427_0_0_6"/>
<dbReference type="Proteomes" id="UP000008540">
    <property type="component" value="Chromosome"/>
</dbReference>
<dbReference type="GO" id="GO:0005829">
    <property type="term" value="C:cytosol"/>
    <property type="evidence" value="ECO:0007669"/>
    <property type="project" value="TreeGrafter"/>
</dbReference>
<dbReference type="GO" id="GO:0002161">
    <property type="term" value="F:aminoacyl-tRNA deacylase activity"/>
    <property type="evidence" value="ECO:0007669"/>
    <property type="project" value="InterPro"/>
</dbReference>
<dbReference type="GO" id="GO:0005524">
    <property type="term" value="F:ATP binding"/>
    <property type="evidence" value="ECO:0007669"/>
    <property type="project" value="UniProtKB-UniRule"/>
</dbReference>
<dbReference type="GO" id="GO:0004823">
    <property type="term" value="F:leucine-tRNA ligase activity"/>
    <property type="evidence" value="ECO:0007669"/>
    <property type="project" value="UniProtKB-UniRule"/>
</dbReference>
<dbReference type="GO" id="GO:0006429">
    <property type="term" value="P:leucyl-tRNA aminoacylation"/>
    <property type="evidence" value="ECO:0007669"/>
    <property type="project" value="UniProtKB-UniRule"/>
</dbReference>
<dbReference type="CDD" id="cd07958">
    <property type="entry name" value="Anticodon_Ia_Leu_BEm"/>
    <property type="match status" value="1"/>
</dbReference>
<dbReference type="CDD" id="cd00812">
    <property type="entry name" value="LeuRS_core"/>
    <property type="match status" value="1"/>
</dbReference>
<dbReference type="FunFam" id="1.10.730.10:FF:000003">
    <property type="entry name" value="Leucine--tRNA ligase"/>
    <property type="match status" value="1"/>
</dbReference>
<dbReference type="FunFam" id="2.20.28.290:FF:000001">
    <property type="entry name" value="Leucine--tRNA ligase"/>
    <property type="match status" value="1"/>
</dbReference>
<dbReference type="FunFam" id="3.10.20.590:FF:000001">
    <property type="entry name" value="Leucine--tRNA ligase"/>
    <property type="match status" value="1"/>
</dbReference>
<dbReference type="FunFam" id="3.40.50.620:FF:000003">
    <property type="entry name" value="Leucine--tRNA ligase"/>
    <property type="match status" value="1"/>
</dbReference>
<dbReference type="FunFam" id="3.40.50.620:FF:000124">
    <property type="entry name" value="Leucine--tRNA ligase"/>
    <property type="match status" value="1"/>
</dbReference>
<dbReference type="FunFam" id="3.90.740.10:FF:000012">
    <property type="entry name" value="Leucine--tRNA ligase"/>
    <property type="match status" value="1"/>
</dbReference>
<dbReference type="Gene3D" id="2.20.28.290">
    <property type="match status" value="1"/>
</dbReference>
<dbReference type="Gene3D" id="3.10.20.590">
    <property type="match status" value="1"/>
</dbReference>
<dbReference type="Gene3D" id="3.40.50.620">
    <property type="entry name" value="HUPs"/>
    <property type="match status" value="2"/>
</dbReference>
<dbReference type="Gene3D" id="1.10.730.10">
    <property type="entry name" value="Isoleucyl-tRNA Synthetase, Domain 1"/>
    <property type="match status" value="1"/>
</dbReference>
<dbReference type="Gene3D" id="3.90.740.10">
    <property type="entry name" value="Valyl/Leucyl/Isoleucyl-tRNA synthetase, editing domain"/>
    <property type="match status" value="1"/>
</dbReference>
<dbReference type="HAMAP" id="MF_00049_B">
    <property type="entry name" value="Leu_tRNA_synth_B"/>
    <property type="match status" value="1"/>
</dbReference>
<dbReference type="InterPro" id="IPR001412">
    <property type="entry name" value="aa-tRNA-synth_I_CS"/>
</dbReference>
<dbReference type="InterPro" id="IPR002300">
    <property type="entry name" value="aa-tRNA-synth_Ia"/>
</dbReference>
<dbReference type="InterPro" id="IPR002302">
    <property type="entry name" value="Leu-tRNA-ligase"/>
</dbReference>
<dbReference type="InterPro" id="IPR025709">
    <property type="entry name" value="Leu_tRNA-synth_edit"/>
</dbReference>
<dbReference type="InterPro" id="IPR013155">
    <property type="entry name" value="M/V/L/I-tRNA-synth_anticd-bd"/>
</dbReference>
<dbReference type="InterPro" id="IPR015413">
    <property type="entry name" value="Methionyl/Leucyl_tRNA_Synth"/>
</dbReference>
<dbReference type="InterPro" id="IPR014729">
    <property type="entry name" value="Rossmann-like_a/b/a_fold"/>
</dbReference>
<dbReference type="InterPro" id="IPR009080">
    <property type="entry name" value="tRNAsynth_Ia_anticodon-bd"/>
</dbReference>
<dbReference type="InterPro" id="IPR009008">
    <property type="entry name" value="Val/Leu/Ile-tRNA-synth_edit"/>
</dbReference>
<dbReference type="NCBIfam" id="TIGR00396">
    <property type="entry name" value="leuS_bact"/>
    <property type="match status" value="1"/>
</dbReference>
<dbReference type="PANTHER" id="PTHR43740:SF2">
    <property type="entry name" value="LEUCINE--TRNA LIGASE, MITOCHONDRIAL"/>
    <property type="match status" value="1"/>
</dbReference>
<dbReference type="PANTHER" id="PTHR43740">
    <property type="entry name" value="LEUCYL-TRNA SYNTHETASE"/>
    <property type="match status" value="1"/>
</dbReference>
<dbReference type="Pfam" id="PF08264">
    <property type="entry name" value="Anticodon_1"/>
    <property type="match status" value="1"/>
</dbReference>
<dbReference type="Pfam" id="PF00133">
    <property type="entry name" value="tRNA-synt_1"/>
    <property type="match status" value="2"/>
</dbReference>
<dbReference type="Pfam" id="PF13603">
    <property type="entry name" value="tRNA-synt_1_2"/>
    <property type="match status" value="1"/>
</dbReference>
<dbReference type="Pfam" id="PF09334">
    <property type="entry name" value="tRNA-synt_1g"/>
    <property type="match status" value="1"/>
</dbReference>
<dbReference type="PRINTS" id="PR00985">
    <property type="entry name" value="TRNASYNTHLEU"/>
</dbReference>
<dbReference type="SUPFAM" id="SSF47323">
    <property type="entry name" value="Anticodon-binding domain of a subclass of class I aminoacyl-tRNA synthetases"/>
    <property type="match status" value="1"/>
</dbReference>
<dbReference type="SUPFAM" id="SSF52374">
    <property type="entry name" value="Nucleotidylyl transferase"/>
    <property type="match status" value="1"/>
</dbReference>
<dbReference type="SUPFAM" id="SSF50677">
    <property type="entry name" value="ValRS/IleRS/LeuRS editing domain"/>
    <property type="match status" value="1"/>
</dbReference>
<dbReference type="PROSITE" id="PS00178">
    <property type="entry name" value="AA_TRNA_LIGASE_I"/>
    <property type="match status" value="1"/>
</dbReference>
<sequence length="868" mass="96954">MHEHYQPREIEAAAQLFWDEQKSFEVSEQPGKETYYCLSMFPYPSGKLHMGHVRNYTIGDVISRYQRMQGKNVLQPMGWDAFGMPAENAAMKNNVAPAKWTYENIAYMKTQLRSLGLAVDWSREVTTCKPDYYRWEQWLFTRLFEKGVIYRKNGTVNWDPIDQTVLANEQVIDGRGWRSGALIEKREIPMYYFKITAYADELLESLDELPGWPEQVKTMQRNWIGKSRGMEVQFPYDQASIGEAGTLKVFTTRPDTLMGATYVAVAAEHPLATLAAQDNPELQAFIAECKGGSVAEADMATQEKKGLPTSLFVEHPLTGEKLPVWVANYVLMHYGDGAVMAVPAHDERDFEFATKYNLPIKAVVRTSAGDETPAPWQDAYGEHGELINSGEFNGLDFPGAFDAIEVALLKKNLGQSRTQFRLRDWGISRQRYWGCPIPIIHCDSCGDVPVPQEQLPVVLPEDVVPDGAGSPLARMPEFYECSCPKCGAPAKRETDTMDTFVESSWYYARYASPHYEGGLVDPAAANHWLPVDQYIGGIEHAILHLLYARFFHKLMRDEGLVSSNEPFKNLLTQGMVIAETYYRREANGSYTWYNPADVELERDSKAKIIGAKLISDGLPVEIGGTEKMAKSKNNGVDPQSMIEQYGADTCRLFMMFASPPDMSLEWSDSGVEGAHRFLKRVWRLAQAHVSQGLPGALDIATLSDEQKAIRRAIHLAIKQASQDVGQHHKFNTAIAQVMTLMNVLEKAPQGSEQDRALLQEGLQTVALLLAPITPHISHELWGQLGQSGAIIDAGWPALDESALVQDSLQLVIQVNGKLRGQIEMPASASREEVEAAARSNENVLRFTEGLTIRKVIVVPGKLVNIVAS</sequence>
<accession>Q4K5H6</accession>
<protein>
    <recommendedName>
        <fullName evidence="1">Leucine--tRNA ligase</fullName>
        <ecNumber evidence="1">6.1.1.4</ecNumber>
    </recommendedName>
    <alternativeName>
        <fullName evidence="1">Leucyl-tRNA synthetase</fullName>
        <shortName evidence="1">LeuRS</shortName>
    </alternativeName>
</protein>
<organism>
    <name type="scientific">Pseudomonas fluorescens (strain ATCC BAA-477 / NRRL B-23932 / Pf-5)</name>
    <dbReference type="NCBI Taxonomy" id="220664"/>
    <lineage>
        <taxon>Bacteria</taxon>
        <taxon>Pseudomonadati</taxon>
        <taxon>Pseudomonadota</taxon>
        <taxon>Gammaproteobacteria</taxon>
        <taxon>Pseudomonadales</taxon>
        <taxon>Pseudomonadaceae</taxon>
        <taxon>Pseudomonas</taxon>
    </lineage>
</organism>
<proteinExistence type="inferred from homology"/>
<feature type="chain" id="PRO_1000091347" description="Leucine--tRNA ligase">
    <location>
        <begin position="1"/>
        <end position="868"/>
    </location>
</feature>
<feature type="short sequence motif" description="'HIGH' region">
    <location>
        <begin position="42"/>
        <end position="52"/>
    </location>
</feature>
<feature type="short sequence motif" description="'KMSKS' region">
    <location>
        <begin position="627"/>
        <end position="631"/>
    </location>
</feature>
<feature type="binding site" evidence="1">
    <location>
        <position position="630"/>
    </location>
    <ligand>
        <name>ATP</name>
        <dbReference type="ChEBI" id="CHEBI:30616"/>
    </ligand>
</feature>